<reference key="1">
    <citation type="journal article" date="1992" name="DNA Cell Biol.">
        <title>Characterization of cDNA and genomic sequences encoding rabbit ELAM-1: conservation of structure and functional interactions with leukocytes.</title>
        <authorList>
            <person name="Larigan J.D."/>
            <person name="Tsang T.C."/>
            <person name="Rumberger J.M."/>
            <person name="Burns D.K."/>
        </authorList>
    </citation>
    <scope>NUCLEOTIDE SEQUENCE [MRNA]</scope>
    <scope>INDUCTION BY CYTOKINES</scope>
    <source>
        <tissue>Heart</tissue>
    </source>
</reference>
<dbReference type="EMBL" id="M91004">
    <property type="protein sequence ID" value="AAA31243.1"/>
    <property type="molecule type" value="mRNA"/>
</dbReference>
<dbReference type="EMBL" id="M91005">
    <property type="protein sequence ID" value="AAA31244.1"/>
    <property type="molecule type" value="mRNA"/>
</dbReference>
<dbReference type="PIR" id="I46709">
    <property type="entry name" value="I46709"/>
</dbReference>
<dbReference type="RefSeq" id="NP_001075781.1">
    <property type="nucleotide sequence ID" value="NM_001082312.1"/>
</dbReference>
<dbReference type="SMR" id="P27113"/>
<dbReference type="FunCoup" id="P27113">
    <property type="interactions" value="19"/>
</dbReference>
<dbReference type="STRING" id="9986.ENSOCUP00000026008"/>
<dbReference type="GlyCosmos" id="P27113">
    <property type="glycosylation" value="12 sites, No reported glycans"/>
</dbReference>
<dbReference type="PaxDb" id="9986-ENSOCUP00000026008"/>
<dbReference type="GeneID" id="100009151"/>
<dbReference type="KEGG" id="ocu:100009151"/>
<dbReference type="CTD" id="6401"/>
<dbReference type="eggNOG" id="KOG4297">
    <property type="taxonomic scope" value="Eukaryota"/>
</dbReference>
<dbReference type="InParanoid" id="P27113"/>
<dbReference type="OrthoDB" id="406096at2759"/>
<dbReference type="Proteomes" id="UP000001811">
    <property type="component" value="Unplaced"/>
</dbReference>
<dbReference type="GO" id="GO:0005886">
    <property type="term" value="C:plasma membrane"/>
    <property type="evidence" value="ECO:0007669"/>
    <property type="project" value="UniProtKB-SubCell"/>
</dbReference>
<dbReference type="GO" id="GO:0030246">
    <property type="term" value="F:carbohydrate binding"/>
    <property type="evidence" value="ECO:0007669"/>
    <property type="project" value="UniProtKB-KW"/>
</dbReference>
<dbReference type="GO" id="GO:0046872">
    <property type="term" value="F:metal ion binding"/>
    <property type="evidence" value="ECO:0007669"/>
    <property type="project" value="UniProtKB-KW"/>
</dbReference>
<dbReference type="GO" id="GO:0007155">
    <property type="term" value="P:cell adhesion"/>
    <property type="evidence" value="ECO:0007669"/>
    <property type="project" value="UniProtKB-KW"/>
</dbReference>
<dbReference type="GO" id="GO:1903238">
    <property type="term" value="P:positive regulation of leukocyte tethering or rolling"/>
    <property type="evidence" value="ECO:0000250"/>
    <property type="project" value="UniProtKB"/>
</dbReference>
<dbReference type="CDD" id="cd00033">
    <property type="entry name" value="CCP"/>
    <property type="match status" value="5"/>
</dbReference>
<dbReference type="CDD" id="cd03592">
    <property type="entry name" value="CLECT_selectins_like"/>
    <property type="match status" value="1"/>
</dbReference>
<dbReference type="CDD" id="cd00054">
    <property type="entry name" value="EGF_CA"/>
    <property type="match status" value="1"/>
</dbReference>
<dbReference type="FunFam" id="3.10.100.10:FF:000007">
    <property type="entry name" value="L-selectin"/>
    <property type="match status" value="1"/>
</dbReference>
<dbReference type="FunFam" id="2.10.25.10:FF:000176">
    <property type="entry name" value="Selectin P"/>
    <property type="match status" value="1"/>
</dbReference>
<dbReference type="FunFam" id="2.10.70.10:FF:000001">
    <property type="entry name" value="Selectin P"/>
    <property type="match status" value="4"/>
</dbReference>
<dbReference type="Gene3D" id="2.10.70.10">
    <property type="entry name" value="Complement Module, domain 1"/>
    <property type="match status" value="5"/>
</dbReference>
<dbReference type="Gene3D" id="3.10.100.10">
    <property type="entry name" value="Mannose-Binding Protein A, subunit A"/>
    <property type="match status" value="1"/>
</dbReference>
<dbReference type="InterPro" id="IPR001304">
    <property type="entry name" value="C-type_lectin-like"/>
</dbReference>
<dbReference type="InterPro" id="IPR016186">
    <property type="entry name" value="C-type_lectin-like/link_sf"/>
</dbReference>
<dbReference type="InterPro" id="IPR018378">
    <property type="entry name" value="C-type_lectin_CS"/>
</dbReference>
<dbReference type="InterPro" id="IPR050350">
    <property type="entry name" value="Compl-Cell_Adhes-Reg"/>
</dbReference>
<dbReference type="InterPro" id="IPR016187">
    <property type="entry name" value="CTDL_fold"/>
</dbReference>
<dbReference type="InterPro" id="IPR000742">
    <property type="entry name" value="EGF-like_dom"/>
</dbReference>
<dbReference type="InterPro" id="IPR033991">
    <property type="entry name" value="Selectin_CTLD"/>
</dbReference>
<dbReference type="InterPro" id="IPR002396">
    <property type="entry name" value="Selectin_superfamily"/>
</dbReference>
<dbReference type="InterPro" id="IPR035976">
    <property type="entry name" value="Sushi/SCR/CCP_sf"/>
</dbReference>
<dbReference type="InterPro" id="IPR000436">
    <property type="entry name" value="Sushi_SCR_CCP_dom"/>
</dbReference>
<dbReference type="PANTHER" id="PTHR19325">
    <property type="entry name" value="COMPLEMENT COMPONENT-RELATED SUSHI DOMAIN-CONTAINING"/>
    <property type="match status" value="1"/>
</dbReference>
<dbReference type="PANTHER" id="PTHR19325:SF493">
    <property type="entry name" value="E-SELECTIN"/>
    <property type="match status" value="1"/>
</dbReference>
<dbReference type="Pfam" id="PF00008">
    <property type="entry name" value="EGF"/>
    <property type="match status" value="1"/>
</dbReference>
<dbReference type="Pfam" id="PF00059">
    <property type="entry name" value="Lectin_C"/>
    <property type="match status" value="1"/>
</dbReference>
<dbReference type="Pfam" id="PF00084">
    <property type="entry name" value="Sushi"/>
    <property type="match status" value="5"/>
</dbReference>
<dbReference type="PRINTS" id="PR00343">
    <property type="entry name" value="SELECTIN"/>
</dbReference>
<dbReference type="SMART" id="SM00032">
    <property type="entry name" value="CCP"/>
    <property type="match status" value="5"/>
</dbReference>
<dbReference type="SMART" id="SM00034">
    <property type="entry name" value="CLECT"/>
    <property type="match status" value="1"/>
</dbReference>
<dbReference type="SMART" id="SM00181">
    <property type="entry name" value="EGF"/>
    <property type="match status" value="1"/>
</dbReference>
<dbReference type="SUPFAM" id="SSF56436">
    <property type="entry name" value="C-type lectin-like"/>
    <property type="match status" value="1"/>
</dbReference>
<dbReference type="SUPFAM" id="SSF57535">
    <property type="entry name" value="Complement control module/SCR domain"/>
    <property type="match status" value="5"/>
</dbReference>
<dbReference type="PROSITE" id="PS00615">
    <property type="entry name" value="C_TYPE_LECTIN_1"/>
    <property type="match status" value="1"/>
</dbReference>
<dbReference type="PROSITE" id="PS50041">
    <property type="entry name" value="C_TYPE_LECTIN_2"/>
    <property type="match status" value="1"/>
</dbReference>
<dbReference type="PROSITE" id="PS00022">
    <property type="entry name" value="EGF_1"/>
    <property type="match status" value="1"/>
</dbReference>
<dbReference type="PROSITE" id="PS01186">
    <property type="entry name" value="EGF_2"/>
    <property type="match status" value="1"/>
</dbReference>
<dbReference type="PROSITE" id="PS50026">
    <property type="entry name" value="EGF_3"/>
    <property type="match status" value="1"/>
</dbReference>
<dbReference type="PROSITE" id="PS50923">
    <property type="entry name" value="SUSHI"/>
    <property type="match status" value="5"/>
</dbReference>
<gene>
    <name type="primary">SELE</name>
</gene>
<keyword id="KW-0106">Calcium</keyword>
<keyword id="KW-0130">Cell adhesion</keyword>
<keyword id="KW-1003">Cell membrane</keyword>
<keyword id="KW-1015">Disulfide bond</keyword>
<keyword id="KW-0245">EGF-like domain</keyword>
<keyword id="KW-0325">Glycoprotein</keyword>
<keyword id="KW-0430">Lectin</keyword>
<keyword id="KW-0472">Membrane</keyword>
<keyword id="KW-0479">Metal-binding</keyword>
<keyword id="KW-1185">Reference proteome</keyword>
<keyword id="KW-0677">Repeat</keyword>
<keyword id="KW-0732">Signal</keyword>
<keyword id="KW-0768">Sushi</keyword>
<keyword id="KW-0812">Transmembrane</keyword>
<keyword id="KW-1133">Transmembrane helix</keyword>
<sequence>MVASWLLSTLTFALVLLIKETSTWTYHFSAENMTYDEASAYCQQNYTHLVAIQNKEEIDYLNSILDYSPSYYWIGIRKVNNVWIWVGTHKPLTEGAKNWAPGEPNNKQNNEDCVEIYIKRPKDTGMWNDERCSKKKLALCYTAACTEASCSGHGECIETINNYSCKCYPGFSGLKCEQVVTCEAQVQPQHGSLNCTHPLGNFSYNSSCSVSCERGYLPSSTETTWCTSSGEWSAPPATCKVVECDTMGKPANGDVKCSPSQGSAPWNTTCTFDCEEGFTLLGARSLQCTSSGSWDNEKPTCKAVSCDTIHHPQNGSVSCSNSSEGKFTFRSSCNFTCEENFLLRGPAQVECTAQGQWTQQAPVCEAVKCDPVHTLEDGFVKCTHPHTGEFTYKSSCTFNCREGFELHGSAQLECTSQGQWAQELPSCQVVQCPSLAVLGKTNVSCSGEPVFGTVCNFACPEGWTLNGSAALMCGAEGQWSGMLPTCEEPIASNVPLAVGLSVSGTSFLTLTSFLLWFLKYFRKKAKKFVPASSRYVGLEAHGNCQVPSHLI</sequence>
<organism>
    <name type="scientific">Oryctolagus cuniculus</name>
    <name type="common">Rabbit</name>
    <dbReference type="NCBI Taxonomy" id="9986"/>
    <lineage>
        <taxon>Eukaryota</taxon>
        <taxon>Metazoa</taxon>
        <taxon>Chordata</taxon>
        <taxon>Craniata</taxon>
        <taxon>Vertebrata</taxon>
        <taxon>Euteleostomi</taxon>
        <taxon>Mammalia</taxon>
        <taxon>Eutheria</taxon>
        <taxon>Euarchontoglires</taxon>
        <taxon>Glires</taxon>
        <taxon>Lagomorpha</taxon>
        <taxon>Leporidae</taxon>
        <taxon>Oryctolagus</taxon>
    </lineage>
</organism>
<comment type="function">
    <text evidence="2">Cell-surface glycoprotein having a role in immunoadhesion. Mediates in the adhesion of blood neutrophils in cytokine-activated endothelium through interaction with SELPLG/PSGL1. May have a role in capillary morphogenesis.</text>
</comment>
<comment type="subunit">
    <text evidence="2">Interacts with SELPLG/PSGL1 and PODXL2 through the sialyl Lewis X epitope. SELPLG sulfation appears not to be required for this interaction.</text>
</comment>
<comment type="subcellular location">
    <subcellularLocation>
        <location evidence="2">Cell membrane</location>
        <topology evidence="2">Single-pass type I membrane protein</topology>
    </subcellularLocation>
</comment>
<comment type="induction">
    <text evidence="7">By cytokines.</text>
</comment>
<comment type="similarity">
    <text evidence="9">Belongs to the selectin/LECAM family.</text>
</comment>
<accession>P27113</accession>
<evidence type="ECO:0000250" key="1"/>
<evidence type="ECO:0000250" key="2">
    <source>
        <dbReference type="UniProtKB" id="P16581"/>
    </source>
</evidence>
<evidence type="ECO:0000255" key="3"/>
<evidence type="ECO:0000255" key="4">
    <source>
        <dbReference type="PROSITE-ProRule" id="PRU00040"/>
    </source>
</evidence>
<evidence type="ECO:0000255" key="5">
    <source>
        <dbReference type="PROSITE-ProRule" id="PRU00076"/>
    </source>
</evidence>
<evidence type="ECO:0000255" key="6">
    <source>
        <dbReference type="PROSITE-ProRule" id="PRU00302"/>
    </source>
</evidence>
<evidence type="ECO:0000269" key="7">
    <source>
    </source>
</evidence>
<evidence type="ECO:0000303" key="8">
    <source>
    </source>
</evidence>
<evidence type="ECO:0000305" key="9"/>
<proteinExistence type="evidence at transcript level"/>
<feature type="signal peptide">
    <location>
        <begin position="1"/>
        <end position="23"/>
    </location>
</feature>
<feature type="chain" id="PRO_0000017495" description="E-selectin">
    <location>
        <begin position="24"/>
        <end position="551"/>
    </location>
</feature>
<feature type="topological domain" description="Extracellular" evidence="3">
    <location>
        <begin position="24"/>
        <end position="495"/>
    </location>
</feature>
<feature type="transmembrane region" description="Helical" evidence="3">
    <location>
        <begin position="496"/>
        <end position="517"/>
    </location>
</feature>
<feature type="topological domain" description="Cytoplasmic" evidence="3">
    <location>
        <begin position="518"/>
        <end position="551"/>
    </location>
</feature>
<feature type="domain" description="C-type lectin" evidence="4">
    <location>
        <begin position="24"/>
        <end position="141"/>
    </location>
</feature>
<feature type="domain" description="EGF-like" evidence="5">
    <location>
        <begin position="142"/>
        <end position="177"/>
    </location>
</feature>
<feature type="domain" description="Sushi 1" evidence="6">
    <location>
        <begin position="180"/>
        <end position="241"/>
    </location>
</feature>
<feature type="domain" description="Sushi 2" evidence="6">
    <location>
        <begin position="242"/>
        <end position="303"/>
    </location>
</feature>
<feature type="domain" description="Sushi 3" evidence="6">
    <location>
        <begin position="305"/>
        <end position="366"/>
    </location>
</feature>
<feature type="domain" description="Sushi 4" evidence="6">
    <location>
        <begin position="368"/>
        <end position="429"/>
    </location>
</feature>
<feature type="domain" description="Sushi 5" evidence="6">
    <location>
        <begin position="430"/>
        <end position="488"/>
    </location>
</feature>
<feature type="binding site" evidence="2">
    <location>
        <begin position="103"/>
        <end position="111"/>
    </location>
    <ligand>
        <name>a carbohydrate</name>
        <dbReference type="ChEBI" id="CHEBI:16646"/>
    </ligand>
</feature>
<feature type="binding site" evidence="2">
    <location>
        <position position="103"/>
    </location>
    <ligand>
        <name>Ca(2+)</name>
        <dbReference type="ChEBI" id="CHEBI:29108"/>
    </ligand>
</feature>
<feature type="binding site" evidence="2">
    <location>
        <position position="105"/>
    </location>
    <ligand>
        <name>Ca(2+)</name>
        <dbReference type="ChEBI" id="CHEBI:29108"/>
    </ligand>
</feature>
<feature type="binding site" evidence="2">
    <location>
        <position position="111"/>
    </location>
    <ligand>
        <name>Ca(2+)</name>
        <dbReference type="ChEBI" id="CHEBI:29108"/>
    </ligand>
</feature>
<feature type="binding site" evidence="2">
    <location>
        <begin position="115"/>
        <end position="120"/>
    </location>
    <ligand>
        <name>a carbohydrate</name>
        <dbReference type="ChEBI" id="CHEBI:16646"/>
    </ligand>
</feature>
<feature type="binding site" evidence="2">
    <location>
        <begin position="128"/>
        <end position="130"/>
    </location>
    <ligand>
        <name>a carbohydrate</name>
        <dbReference type="ChEBI" id="CHEBI:16646"/>
    </ligand>
</feature>
<feature type="binding site" evidence="2">
    <location>
        <position position="128"/>
    </location>
    <ligand>
        <name>Ca(2+)</name>
        <dbReference type="ChEBI" id="CHEBI:29108"/>
    </ligand>
</feature>
<feature type="binding site" evidence="2">
    <location>
        <position position="129"/>
    </location>
    <ligand>
        <name>Ca(2+)</name>
        <dbReference type="ChEBI" id="CHEBI:29108"/>
    </ligand>
</feature>
<feature type="glycosylation site" description="N-linked (GlcNAc...) asparagine" evidence="3">
    <location>
        <position position="32"/>
    </location>
</feature>
<feature type="glycosylation site" description="N-linked (GlcNAc...) asparagine" evidence="3">
    <location>
        <position position="45"/>
    </location>
</feature>
<feature type="glycosylation site" description="N-linked (GlcNAc...) asparagine" evidence="3">
    <location>
        <position position="162"/>
    </location>
</feature>
<feature type="glycosylation site" description="N-linked (GlcNAc...) asparagine" evidence="3">
    <location>
        <position position="194"/>
    </location>
</feature>
<feature type="glycosylation site" description="N-linked (GlcNAc...) asparagine" evidence="3">
    <location>
        <position position="201"/>
    </location>
</feature>
<feature type="glycosylation site" description="N-linked (GlcNAc...) asparagine" evidence="3">
    <location>
        <position position="205"/>
    </location>
</feature>
<feature type="glycosylation site" description="N-linked (GlcNAc...) asparagine" evidence="3">
    <location>
        <position position="267"/>
    </location>
</feature>
<feature type="glycosylation site" description="N-linked (GlcNAc...) asparagine" evidence="3">
    <location>
        <position position="314"/>
    </location>
</feature>
<feature type="glycosylation site" description="N-linked (GlcNAc...) asparagine" evidence="3">
    <location>
        <position position="321"/>
    </location>
</feature>
<feature type="glycosylation site" description="N-linked (GlcNAc...) asparagine" evidence="3">
    <location>
        <position position="334"/>
    </location>
</feature>
<feature type="glycosylation site" description="N-linked (GlcNAc...) asparagine" evidence="3">
    <location>
        <position position="442"/>
    </location>
</feature>
<feature type="glycosylation site" description="N-linked (GlcNAc...) asparagine" evidence="3">
    <location>
        <position position="466"/>
    </location>
</feature>
<feature type="disulfide bond" evidence="2">
    <location>
        <begin position="42"/>
        <end position="140"/>
    </location>
</feature>
<feature type="disulfide bond" evidence="2">
    <location>
        <begin position="113"/>
        <end position="132"/>
    </location>
</feature>
<feature type="disulfide bond" evidence="2">
    <location>
        <begin position="145"/>
        <end position="156"/>
    </location>
</feature>
<feature type="disulfide bond" evidence="2">
    <location>
        <begin position="150"/>
        <end position="165"/>
    </location>
</feature>
<feature type="disulfide bond" evidence="2">
    <location>
        <begin position="167"/>
        <end position="176"/>
    </location>
</feature>
<feature type="disulfide bond" evidence="2">
    <location>
        <begin position="182"/>
        <end position="226"/>
    </location>
</feature>
<feature type="disulfide bond" evidence="2">
    <location>
        <begin position="195"/>
        <end position="208"/>
    </location>
</feature>
<feature type="disulfide bond" evidence="2">
    <location>
        <begin position="212"/>
        <end position="239"/>
    </location>
</feature>
<feature type="disulfide bond" evidence="2">
    <location>
        <begin position="244"/>
        <end position="288"/>
    </location>
</feature>
<feature type="disulfide bond" evidence="2">
    <location>
        <begin position="257"/>
        <end position="270"/>
    </location>
</feature>
<feature type="disulfide bond" evidence="2">
    <location>
        <begin position="274"/>
        <end position="301"/>
    </location>
</feature>
<feature type="disulfide bond" evidence="1">
    <location>
        <begin position="306"/>
        <end position="351"/>
    </location>
</feature>
<feature type="disulfide bond" evidence="1">
    <location>
        <begin position="337"/>
        <end position="364"/>
    </location>
</feature>
<feature type="disulfide bond" evidence="1">
    <location>
        <begin position="369"/>
        <end position="414"/>
    </location>
</feature>
<feature type="disulfide bond" evidence="1">
    <location>
        <begin position="400"/>
        <end position="427"/>
    </location>
</feature>
<feature type="disulfide bond" evidence="1">
    <location>
        <begin position="432"/>
        <end position="473"/>
    </location>
</feature>
<feature type="disulfide bond" evidence="1">
    <location>
        <begin position="459"/>
        <end position="486"/>
    </location>
</feature>
<feature type="sequence conflict" description="In Ref. 1; AAA31244." evidence="9" ref="1">
    <original>T</original>
    <variation>A</variation>
    <location>
        <position position="308"/>
    </location>
</feature>
<feature type="sequence conflict" description="In Ref. 1; AAA31244." evidence="9" ref="1">
    <original>T</original>
    <variation>A</variation>
    <location>
        <position position="328"/>
    </location>
</feature>
<feature type="sequence conflict" description="In Ref. 1; AAA31244." evidence="9" ref="1">
    <original>A</original>
    <variation>V</variation>
    <location>
        <position position="491"/>
    </location>
</feature>
<protein>
    <recommendedName>
        <fullName>E-selectin</fullName>
    </recommendedName>
    <alternativeName>
        <fullName>CD62 antigen-like family member E</fullName>
    </alternativeName>
    <alternativeName>
        <fullName>Endothelial leukocyte adhesion molecule 1</fullName>
        <shortName evidence="8">ELAM-1</shortName>
    </alternativeName>
    <alternativeName>
        <fullName>Leukocyte-endothelial cell adhesion molecule 2</fullName>
        <shortName>LECAM2</shortName>
    </alternativeName>
    <cdAntigenName>CD62E</cdAntigenName>
</protein>
<name>LYAM2_RABIT</name>